<keyword id="KW-0131">Cell cycle</keyword>
<keyword id="KW-0132">Cell division</keyword>
<keyword id="KW-0175">Coiled coil</keyword>
<keyword id="KW-0963">Cytoplasm</keyword>
<keyword id="KW-0717">Septation</keyword>
<sequence length="71" mass="8316">MHMSLEVLEQLESKVQSAVDNISLLKMELDELKEQNSKLQDENHLLRNEHVAWQERLRALLGKMEQMGESI</sequence>
<comment type="function">
    <text evidence="1">Non-essential, abundant cell division factor that is required for proper Z-ring formation. It is recruited early to the divisome by direct interaction with FtsZ, stimulating Z-ring assembly and thereby promoting cell division earlier in the cell cycle. Its recruitment to the Z-ring requires functional FtsA or ZipA.</text>
</comment>
<comment type="subunit">
    <text evidence="1">Homodimer. The ends of the coiled-coil dimer bind to each other, forming polymers. Interacts with FtsZ.</text>
</comment>
<comment type="subcellular location">
    <subcellularLocation>
        <location>Cytoplasm</location>
    </subcellularLocation>
    <text evidence="1">Localizes to the septum at mid-cell, in a FtsZ-like pattern.</text>
</comment>
<comment type="similarity">
    <text evidence="1">Belongs to the ZapB family.</text>
</comment>
<comment type="sequence caution" evidence="2">
    <conflict type="erroneous initiation">
        <sequence resource="EMBL-CDS" id="ABO92126"/>
    </conflict>
</comment>
<gene>
    <name evidence="1" type="primary">zapB</name>
    <name type="ordered locus">ASA_4196</name>
</gene>
<accession>A4STA4</accession>
<proteinExistence type="inferred from homology"/>
<name>ZAPB_AERS4</name>
<dbReference type="EMBL" id="CP000644">
    <property type="protein sequence ID" value="ABO92126.1"/>
    <property type="status" value="ALT_INIT"/>
    <property type="molecule type" value="Genomic_DNA"/>
</dbReference>
<dbReference type="SMR" id="A4STA4"/>
<dbReference type="STRING" id="29491.GCA_000820065_04453"/>
<dbReference type="KEGG" id="asa:ASA_4196"/>
<dbReference type="eggNOG" id="COG3074">
    <property type="taxonomic scope" value="Bacteria"/>
</dbReference>
<dbReference type="HOGENOM" id="CLU_171174_2_0_6"/>
<dbReference type="Proteomes" id="UP000000225">
    <property type="component" value="Chromosome"/>
</dbReference>
<dbReference type="GO" id="GO:0005737">
    <property type="term" value="C:cytoplasm"/>
    <property type="evidence" value="ECO:0007669"/>
    <property type="project" value="UniProtKB-SubCell"/>
</dbReference>
<dbReference type="GO" id="GO:0000917">
    <property type="term" value="P:division septum assembly"/>
    <property type="evidence" value="ECO:0007669"/>
    <property type="project" value="UniProtKB-KW"/>
</dbReference>
<dbReference type="GO" id="GO:0043093">
    <property type="term" value="P:FtsZ-dependent cytokinesis"/>
    <property type="evidence" value="ECO:0007669"/>
    <property type="project" value="UniProtKB-UniRule"/>
</dbReference>
<dbReference type="Gene3D" id="1.20.5.340">
    <property type="match status" value="1"/>
</dbReference>
<dbReference type="HAMAP" id="MF_01196">
    <property type="entry name" value="ZapB"/>
    <property type="match status" value="1"/>
</dbReference>
<dbReference type="InterPro" id="IPR009252">
    <property type="entry name" value="Cell_div_ZapB"/>
</dbReference>
<dbReference type="Pfam" id="PF06005">
    <property type="entry name" value="ZapB"/>
    <property type="match status" value="1"/>
</dbReference>
<evidence type="ECO:0000255" key="1">
    <source>
        <dbReference type="HAMAP-Rule" id="MF_01196"/>
    </source>
</evidence>
<evidence type="ECO:0000305" key="2"/>
<feature type="chain" id="PRO_0000333893" description="Cell division protein ZapB">
    <location>
        <begin position="1"/>
        <end position="71"/>
    </location>
</feature>
<feature type="coiled-coil region" evidence="1">
    <location>
        <begin position="5"/>
        <end position="67"/>
    </location>
</feature>
<organism>
    <name type="scientific">Aeromonas salmonicida (strain A449)</name>
    <dbReference type="NCBI Taxonomy" id="382245"/>
    <lineage>
        <taxon>Bacteria</taxon>
        <taxon>Pseudomonadati</taxon>
        <taxon>Pseudomonadota</taxon>
        <taxon>Gammaproteobacteria</taxon>
        <taxon>Aeromonadales</taxon>
        <taxon>Aeromonadaceae</taxon>
        <taxon>Aeromonas</taxon>
    </lineage>
</organism>
<protein>
    <recommendedName>
        <fullName evidence="1">Cell division protein ZapB</fullName>
    </recommendedName>
</protein>
<reference key="1">
    <citation type="journal article" date="2008" name="BMC Genomics">
        <title>The genome of Aeromonas salmonicida subsp. salmonicida A449: insights into the evolution of a fish pathogen.</title>
        <authorList>
            <person name="Reith M.E."/>
            <person name="Singh R.K."/>
            <person name="Curtis B."/>
            <person name="Boyd J.M."/>
            <person name="Bouevitch A."/>
            <person name="Kimball J."/>
            <person name="Munholland J."/>
            <person name="Murphy C."/>
            <person name="Sarty D."/>
            <person name="Williams J."/>
            <person name="Nash J.H."/>
            <person name="Johnson S.C."/>
            <person name="Brown L.L."/>
        </authorList>
    </citation>
    <scope>NUCLEOTIDE SEQUENCE [LARGE SCALE GENOMIC DNA]</scope>
    <source>
        <strain>A449</strain>
    </source>
</reference>